<keyword id="KW-0997">Cell inner membrane</keyword>
<keyword id="KW-1003">Cell membrane</keyword>
<keyword id="KW-0406">Ion transport</keyword>
<keyword id="KW-0472">Membrane</keyword>
<keyword id="KW-0630">Potassium</keyword>
<keyword id="KW-0633">Potassium transport</keyword>
<keyword id="KW-0812">Transmembrane</keyword>
<keyword id="KW-1133">Transmembrane helix</keyword>
<keyword id="KW-0813">Transport</keyword>
<feature type="chain" id="PRO_1000119338" description="Potassium-transporting ATPase potassium-binding subunit">
    <location>
        <begin position="1"/>
        <end position="557"/>
    </location>
</feature>
<feature type="transmembrane region" description="Helical" evidence="1">
    <location>
        <begin position="5"/>
        <end position="25"/>
    </location>
</feature>
<feature type="transmembrane region" description="Helical" evidence="1">
    <location>
        <begin position="63"/>
        <end position="83"/>
    </location>
</feature>
<feature type="transmembrane region" description="Helical" evidence="1">
    <location>
        <begin position="132"/>
        <end position="152"/>
    </location>
</feature>
<feature type="transmembrane region" description="Helical" evidence="1">
    <location>
        <begin position="170"/>
        <end position="190"/>
    </location>
</feature>
<feature type="transmembrane region" description="Helical" evidence="1">
    <location>
        <begin position="253"/>
        <end position="273"/>
    </location>
</feature>
<feature type="transmembrane region" description="Helical" evidence="1">
    <location>
        <begin position="283"/>
        <end position="303"/>
    </location>
</feature>
<feature type="transmembrane region" description="Helical" evidence="1">
    <location>
        <begin position="329"/>
        <end position="349"/>
    </location>
</feature>
<feature type="transmembrane region" description="Helical" evidence="1">
    <location>
        <begin position="356"/>
        <end position="376"/>
    </location>
</feature>
<feature type="transmembrane region" description="Helical" evidence="1">
    <location>
        <begin position="379"/>
        <end position="399"/>
    </location>
</feature>
<feature type="transmembrane region" description="Helical" evidence="1">
    <location>
        <begin position="416"/>
        <end position="436"/>
    </location>
</feature>
<feature type="transmembrane region" description="Helical" evidence="1">
    <location>
        <begin position="484"/>
        <end position="504"/>
    </location>
</feature>
<feature type="transmembrane region" description="Helical" evidence="1">
    <location>
        <begin position="526"/>
        <end position="546"/>
    </location>
</feature>
<gene>
    <name evidence="1" type="primary">kdpA</name>
    <name type="ordered locus">ECUMN_0780</name>
</gene>
<evidence type="ECO:0000255" key="1">
    <source>
        <dbReference type="HAMAP-Rule" id="MF_00275"/>
    </source>
</evidence>
<comment type="function">
    <text evidence="1">Part of the high-affinity ATP-driven potassium transport (or Kdp) system, which catalyzes the hydrolysis of ATP coupled with the electrogenic transport of potassium into the cytoplasm. This subunit binds the periplasmic potassium ions and delivers the ions to the membrane domain of KdpB through an intramembrane tunnel.</text>
</comment>
<comment type="subunit">
    <text evidence="1">The system is composed of three essential subunits: KdpA, KdpB and KdpC.</text>
</comment>
<comment type="subcellular location">
    <subcellularLocation>
        <location evidence="1">Cell inner membrane</location>
        <topology evidence="1">Multi-pass membrane protein</topology>
    </subcellularLocation>
</comment>
<comment type="similarity">
    <text evidence="1">Belongs to the KdpA family.</text>
</comment>
<organism>
    <name type="scientific">Escherichia coli O17:K52:H18 (strain UMN026 / ExPEC)</name>
    <dbReference type="NCBI Taxonomy" id="585056"/>
    <lineage>
        <taxon>Bacteria</taxon>
        <taxon>Pseudomonadati</taxon>
        <taxon>Pseudomonadota</taxon>
        <taxon>Gammaproteobacteria</taxon>
        <taxon>Enterobacterales</taxon>
        <taxon>Enterobacteriaceae</taxon>
        <taxon>Escherichia</taxon>
    </lineage>
</organism>
<name>KDPA_ECOLU</name>
<accession>B7N9U1</accession>
<reference key="1">
    <citation type="journal article" date="2009" name="PLoS Genet.">
        <title>Organised genome dynamics in the Escherichia coli species results in highly diverse adaptive paths.</title>
        <authorList>
            <person name="Touchon M."/>
            <person name="Hoede C."/>
            <person name="Tenaillon O."/>
            <person name="Barbe V."/>
            <person name="Baeriswyl S."/>
            <person name="Bidet P."/>
            <person name="Bingen E."/>
            <person name="Bonacorsi S."/>
            <person name="Bouchier C."/>
            <person name="Bouvet O."/>
            <person name="Calteau A."/>
            <person name="Chiapello H."/>
            <person name="Clermont O."/>
            <person name="Cruveiller S."/>
            <person name="Danchin A."/>
            <person name="Diard M."/>
            <person name="Dossat C."/>
            <person name="Karoui M.E."/>
            <person name="Frapy E."/>
            <person name="Garry L."/>
            <person name="Ghigo J.M."/>
            <person name="Gilles A.M."/>
            <person name="Johnson J."/>
            <person name="Le Bouguenec C."/>
            <person name="Lescat M."/>
            <person name="Mangenot S."/>
            <person name="Martinez-Jehanne V."/>
            <person name="Matic I."/>
            <person name="Nassif X."/>
            <person name="Oztas S."/>
            <person name="Petit M.A."/>
            <person name="Pichon C."/>
            <person name="Rouy Z."/>
            <person name="Ruf C.S."/>
            <person name="Schneider D."/>
            <person name="Tourret J."/>
            <person name="Vacherie B."/>
            <person name="Vallenet D."/>
            <person name="Medigue C."/>
            <person name="Rocha E.P.C."/>
            <person name="Denamur E."/>
        </authorList>
    </citation>
    <scope>NUCLEOTIDE SEQUENCE [LARGE SCALE GENOMIC DNA]</scope>
    <source>
        <strain>UMN026 / ExPEC</strain>
    </source>
</reference>
<proteinExistence type="inferred from homology"/>
<dbReference type="EMBL" id="CU928163">
    <property type="protein sequence ID" value="CAR11992.1"/>
    <property type="molecule type" value="Genomic_DNA"/>
</dbReference>
<dbReference type="RefSeq" id="WP_000126623.1">
    <property type="nucleotide sequence ID" value="NC_011751.1"/>
</dbReference>
<dbReference type="RefSeq" id="YP_002411538.1">
    <property type="nucleotide sequence ID" value="NC_011751.1"/>
</dbReference>
<dbReference type="SMR" id="B7N9U1"/>
<dbReference type="STRING" id="585056.ECUMN_0780"/>
<dbReference type="KEGG" id="eum:ECUMN_0780"/>
<dbReference type="PATRIC" id="fig|585056.7.peg.984"/>
<dbReference type="HOGENOM" id="CLU_018614_3_0_6"/>
<dbReference type="Proteomes" id="UP000007097">
    <property type="component" value="Chromosome"/>
</dbReference>
<dbReference type="GO" id="GO:0005886">
    <property type="term" value="C:plasma membrane"/>
    <property type="evidence" value="ECO:0007669"/>
    <property type="project" value="UniProtKB-SubCell"/>
</dbReference>
<dbReference type="GO" id="GO:0008556">
    <property type="term" value="F:P-type potassium transmembrane transporter activity"/>
    <property type="evidence" value="ECO:0007669"/>
    <property type="project" value="InterPro"/>
</dbReference>
<dbReference type="GO" id="GO:0030955">
    <property type="term" value="F:potassium ion binding"/>
    <property type="evidence" value="ECO:0007669"/>
    <property type="project" value="UniProtKB-UniRule"/>
</dbReference>
<dbReference type="HAMAP" id="MF_00275">
    <property type="entry name" value="KdpA"/>
    <property type="match status" value="1"/>
</dbReference>
<dbReference type="InterPro" id="IPR004623">
    <property type="entry name" value="KdpA"/>
</dbReference>
<dbReference type="NCBIfam" id="TIGR00680">
    <property type="entry name" value="kdpA"/>
    <property type="match status" value="1"/>
</dbReference>
<dbReference type="PANTHER" id="PTHR30607">
    <property type="entry name" value="POTASSIUM-TRANSPORTING ATPASE A CHAIN"/>
    <property type="match status" value="1"/>
</dbReference>
<dbReference type="PANTHER" id="PTHR30607:SF2">
    <property type="entry name" value="POTASSIUM-TRANSPORTING ATPASE POTASSIUM-BINDING SUBUNIT"/>
    <property type="match status" value="1"/>
</dbReference>
<dbReference type="Pfam" id="PF03814">
    <property type="entry name" value="KdpA"/>
    <property type="match status" value="1"/>
</dbReference>
<dbReference type="PIRSF" id="PIRSF001294">
    <property type="entry name" value="K_ATPaseA"/>
    <property type="match status" value="1"/>
</dbReference>
<sequence>MTAQGFLLIATFLLVLMVLARPLGSGLARLINDIPLPGTAGVERVLFRLPGVSDSEMNWKQYLCAILGLNMLGLAVLFFMLLGQHYLPLNPQQLPGLSWDLALNTAVSFVTNTNWQSYSGETTLSYFSQMAGLTVQNFLSAASGIAVIFALIRAFTRQSMSTLGNAWVDLLRITLWVLVPVALLIALFFIQQGALQNFLPYQAVNTVEGAQQLLPMGPVASQEAIKMLGTNGGGFFNANSSHPFENPTALTNFVQMLAIFLIPTALCFAFGEVAGDRRQGRMLLWAMSVIFVICVGVVMWAEVQGNPHLLALGADSSINMEGKESRFGVLVSSLFAVVTTAASCGAVIAMHDSFTALGGMVPMWLMQIGEVVFGGVGSGLYGMMLFVLLAVFIAGLMIGRTPEYLGKKIDVREMKLTALAILVTPTLVLMGAALAMMTDAGRSAMLNPGPHGFSEVLYAVSSAANNNGSAFAGLSANSPFWNCLLAFCMFVGRFGVIIPVMAIAGSLVSKKSQPASSGTLPTHGPLFVGLLIGTVLLVGALTFIPALALGPVAEYLS</sequence>
<protein>
    <recommendedName>
        <fullName evidence="1">Potassium-transporting ATPase potassium-binding subunit</fullName>
    </recommendedName>
    <alternativeName>
        <fullName evidence="1">ATP phosphohydrolase [potassium-transporting] A chain</fullName>
    </alternativeName>
    <alternativeName>
        <fullName evidence="1">Potassium-binding and translocating subunit A</fullName>
    </alternativeName>
    <alternativeName>
        <fullName evidence="1">Potassium-translocating ATPase A chain</fullName>
    </alternativeName>
</protein>